<name>AC4CH_SHEB2</name>
<dbReference type="EC" id="3.5.1.135" evidence="2"/>
<dbReference type="EMBL" id="CP001252">
    <property type="protein sequence ID" value="ACK46332.1"/>
    <property type="molecule type" value="Genomic_DNA"/>
</dbReference>
<dbReference type="RefSeq" id="WP_012587455.1">
    <property type="nucleotide sequence ID" value="NC_011663.1"/>
</dbReference>
<dbReference type="SMR" id="B8E759"/>
<dbReference type="KEGG" id="sbp:Sbal223_1827"/>
<dbReference type="HOGENOM" id="CLU_152586_0_0_6"/>
<dbReference type="Proteomes" id="UP000002507">
    <property type="component" value="Chromosome"/>
</dbReference>
<dbReference type="GO" id="GO:0005829">
    <property type="term" value="C:cytosol"/>
    <property type="evidence" value="ECO:0007669"/>
    <property type="project" value="TreeGrafter"/>
</dbReference>
<dbReference type="GO" id="GO:0016813">
    <property type="term" value="F:hydrolase activity, acting on carbon-nitrogen (but not peptide) bonds, in linear amidines"/>
    <property type="evidence" value="ECO:0007669"/>
    <property type="project" value="UniProtKB-UniRule"/>
</dbReference>
<dbReference type="GO" id="GO:0106251">
    <property type="term" value="F:N4-acetylcytidine amidohydrolase activity"/>
    <property type="evidence" value="ECO:0007669"/>
    <property type="project" value="RHEA"/>
</dbReference>
<dbReference type="CDD" id="cd06552">
    <property type="entry name" value="ASCH_yqfb_like"/>
    <property type="match status" value="1"/>
</dbReference>
<dbReference type="Gene3D" id="2.30.130.30">
    <property type="entry name" value="Hypothetical protein"/>
    <property type="match status" value="1"/>
</dbReference>
<dbReference type="HAMAP" id="MF_00684">
    <property type="entry name" value="ac4C_amidohydr"/>
    <property type="match status" value="1"/>
</dbReference>
<dbReference type="InterPro" id="IPR008314">
    <property type="entry name" value="AC4CH"/>
</dbReference>
<dbReference type="InterPro" id="IPR007374">
    <property type="entry name" value="ASCH_domain"/>
</dbReference>
<dbReference type="InterPro" id="IPR015947">
    <property type="entry name" value="PUA-like_sf"/>
</dbReference>
<dbReference type="NCBIfam" id="NF003443">
    <property type="entry name" value="PRK04980.1"/>
    <property type="match status" value="1"/>
</dbReference>
<dbReference type="PANTHER" id="PTHR38088">
    <property type="entry name" value="UCP029143 FAMILY PROTEIN"/>
    <property type="match status" value="1"/>
</dbReference>
<dbReference type="PANTHER" id="PTHR38088:SF2">
    <property type="entry name" value="UCP029143 FAMILY PROTEIN"/>
    <property type="match status" value="1"/>
</dbReference>
<dbReference type="Pfam" id="PF04266">
    <property type="entry name" value="ASCH"/>
    <property type="match status" value="1"/>
</dbReference>
<dbReference type="PIRSF" id="PIRSF029143">
    <property type="entry name" value="UCP029143"/>
    <property type="match status" value="1"/>
</dbReference>
<dbReference type="SMART" id="SM01022">
    <property type="entry name" value="ASCH"/>
    <property type="match status" value="1"/>
</dbReference>
<dbReference type="SUPFAM" id="SSF88697">
    <property type="entry name" value="PUA domain-like"/>
    <property type="match status" value="1"/>
</dbReference>
<sequence>MLLSKITFFERFEHDILSGTKTITLRDEAESHVITGQILPVSTFETDRWFCDIQIIDVTPVKLTELTEVHAKQENMTLPQLCDVIAEIYPGLEQLFMIRFRILSQ</sequence>
<feature type="chain" id="PRO_1000147752" description="N(4)-acetylcytidine amidohydrolase">
    <location>
        <begin position="1"/>
        <end position="105"/>
    </location>
</feature>
<feature type="domain" description="ASCH" evidence="1">
    <location>
        <begin position="7"/>
        <end position="93"/>
    </location>
</feature>
<feature type="active site" description="Proton acceptor" evidence="2">
    <location>
        <position position="21"/>
    </location>
</feature>
<feature type="active site" description="Nucleophile" evidence="2">
    <location>
        <position position="24"/>
    </location>
</feature>
<feature type="active site" description="Proton donor" evidence="2">
    <location>
        <position position="74"/>
    </location>
</feature>
<proteinExistence type="inferred from homology"/>
<keyword id="KW-0378">Hydrolase</keyword>
<accession>B8E759</accession>
<protein>
    <recommendedName>
        <fullName evidence="2">N(4)-acetylcytidine amidohydrolase</fullName>
        <shortName evidence="2">ac4C amidohydrolase</shortName>
        <ecNumber evidence="2">3.5.1.135</ecNumber>
    </recommendedName>
</protein>
<gene>
    <name type="ordered locus">Sbal223_1827</name>
</gene>
<comment type="function">
    <text evidence="2">Catalyzes the hydrolysis of N(4)-acetylcytidine (ac4C).</text>
</comment>
<comment type="catalytic activity">
    <reaction evidence="2">
        <text>N(4)-acetylcytidine + H2O = cytidine + acetate + H(+)</text>
        <dbReference type="Rhea" id="RHEA:62932"/>
        <dbReference type="ChEBI" id="CHEBI:15377"/>
        <dbReference type="ChEBI" id="CHEBI:15378"/>
        <dbReference type="ChEBI" id="CHEBI:17562"/>
        <dbReference type="ChEBI" id="CHEBI:30089"/>
        <dbReference type="ChEBI" id="CHEBI:70989"/>
        <dbReference type="EC" id="3.5.1.135"/>
    </reaction>
</comment>
<comment type="catalytic activity">
    <reaction evidence="2">
        <text>N(4)-acetyl-2'-deoxycytidine + H2O = 2'-deoxycytidine + acetate + H(+)</text>
        <dbReference type="Rhea" id="RHEA:62936"/>
        <dbReference type="ChEBI" id="CHEBI:15377"/>
        <dbReference type="ChEBI" id="CHEBI:15378"/>
        <dbReference type="ChEBI" id="CHEBI:15698"/>
        <dbReference type="ChEBI" id="CHEBI:30089"/>
        <dbReference type="ChEBI" id="CHEBI:146133"/>
        <dbReference type="EC" id="3.5.1.135"/>
    </reaction>
</comment>
<comment type="catalytic activity">
    <reaction evidence="2">
        <text>N(4)-acetylcytosine + H2O = cytosine + acetate + H(+)</text>
        <dbReference type="Rhea" id="RHEA:62940"/>
        <dbReference type="ChEBI" id="CHEBI:15377"/>
        <dbReference type="ChEBI" id="CHEBI:15378"/>
        <dbReference type="ChEBI" id="CHEBI:16040"/>
        <dbReference type="ChEBI" id="CHEBI:30089"/>
        <dbReference type="ChEBI" id="CHEBI:146134"/>
        <dbReference type="EC" id="3.5.1.135"/>
    </reaction>
</comment>
<comment type="similarity">
    <text evidence="2">Belongs to the N(4)-acetylcytidine amidohydrolase family.</text>
</comment>
<evidence type="ECO:0000255" key="1"/>
<evidence type="ECO:0000255" key="2">
    <source>
        <dbReference type="HAMAP-Rule" id="MF_00684"/>
    </source>
</evidence>
<organism>
    <name type="scientific">Shewanella baltica (strain OS223)</name>
    <dbReference type="NCBI Taxonomy" id="407976"/>
    <lineage>
        <taxon>Bacteria</taxon>
        <taxon>Pseudomonadati</taxon>
        <taxon>Pseudomonadota</taxon>
        <taxon>Gammaproteobacteria</taxon>
        <taxon>Alteromonadales</taxon>
        <taxon>Shewanellaceae</taxon>
        <taxon>Shewanella</taxon>
    </lineage>
</organism>
<reference key="1">
    <citation type="submission" date="2008-12" db="EMBL/GenBank/DDBJ databases">
        <title>Complete sequence of chromosome of Shewanella baltica OS223.</title>
        <authorList>
            <consortium name="US DOE Joint Genome Institute"/>
            <person name="Lucas S."/>
            <person name="Copeland A."/>
            <person name="Lapidus A."/>
            <person name="Glavina del Rio T."/>
            <person name="Dalin E."/>
            <person name="Tice H."/>
            <person name="Bruce D."/>
            <person name="Goodwin L."/>
            <person name="Pitluck S."/>
            <person name="Chertkov O."/>
            <person name="Meincke L."/>
            <person name="Brettin T."/>
            <person name="Detter J.C."/>
            <person name="Han C."/>
            <person name="Kuske C.R."/>
            <person name="Larimer F."/>
            <person name="Land M."/>
            <person name="Hauser L."/>
            <person name="Kyrpides N."/>
            <person name="Ovchinnikova G."/>
            <person name="Brettar I."/>
            <person name="Rodrigues J."/>
            <person name="Konstantinidis K."/>
            <person name="Tiedje J."/>
        </authorList>
    </citation>
    <scope>NUCLEOTIDE SEQUENCE [LARGE SCALE GENOMIC DNA]</scope>
    <source>
        <strain>OS223</strain>
    </source>
</reference>